<accession>Q32Q92</accession>
<accession>Q3TQG7</accession>
<accession>Q8BXE0</accession>
<accession>Q8BYI3</accession>
<accession>Q99LZ0</accession>
<proteinExistence type="evidence at protein level"/>
<name>ACOT6_MOUSE</name>
<keyword id="KW-0025">Alternative splicing</keyword>
<keyword id="KW-0276">Fatty acid metabolism</keyword>
<keyword id="KW-0378">Hydrolase</keyword>
<keyword id="KW-0443">Lipid metabolism</keyword>
<keyword id="KW-0576">Peroxisome</keyword>
<keyword id="KW-1185">Reference proteome</keyword>
<keyword id="KW-0719">Serine esterase</keyword>
<dbReference type="EC" id="3.1.2.-" evidence="2"/>
<dbReference type="EMBL" id="AY999300">
    <property type="protein sequence ID" value="AAY45894.1"/>
    <property type="molecule type" value="mRNA"/>
</dbReference>
<dbReference type="EMBL" id="AK039518">
    <property type="protein sequence ID" value="BAC30372.1"/>
    <property type="status" value="ALT_INIT"/>
    <property type="molecule type" value="mRNA"/>
</dbReference>
<dbReference type="EMBL" id="AK047479">
    <property type="protein sequence ID" value="BAC33071.1"/>
    <property type="status" value="ALT_FRAME"/>
    <property type="molecule type" value="mRNA"/>
</dbReference>
<dbReference type="EMBL" id="AK135361">
    <property type="protein sequence ID" value="BAE22505.1"/>
    <property type="molecule type" value="mRNA"/>
</dbReference>
<dbReference type="EMBL" id="AK163605">
    <property type="protein sequence ID" value="BAE37416.1"/>
    <property type="status" value="ALT_SEQ"/>
    <property type="molecule type" value="mRNA"/>
</dbReference>
<dbReference type="EMBL" id="BC002159">
    <property type="protein sequence ID" value="AAH02159.1"/>
    <property type="molecule type" value="mRNA"/>
</dbReference>
<dbReference type="CCDS" id="CCDS26038.1">
    <molecule id="Q32Q92-1"/>
</dbReference>
<dbReference type="RefSeq" id="NP_766168.1">
    <molecule id="Q32Q92-1"/>
    <property type="nucleotide sequence ID" value="NM_172580.2"/>
</dbReference>
<dbReference type="SMR" id="Q32Q92"/>
<dbReference type="FunCoup" id="Q32Q92">
    <property type="interactions" value="149"/>
</dbReference>
<dbReference type="STRING" id="10090.ENSMUSP00000056131"/>
<dbReference type="SwissLipids" id="SLP:000000558"/>
<dbReference type="ESTHER" id="mouse-ACOT6">
    <property type="family name" value="Acyl-CoA_Thioesterase"/>
</dbReference>
<dbReference type="MEROPS" id="S09.A61"/>
<dbReference type="iPTMnet" id="Q32Q92"/>
<dbReference type="PhosphoSitePlus" id="Q32Q92"/>
<dbReference type="SwissPalm" id="Q32Q92"/>
<dbReference type="jPOST" id="Q32Q92"/>
<dbReference type="PaxDb" id="10090-ENSMUSP00000056131"/>
<dbReference type="ProteomicsDB" id="285652">
    <molecule id="Q32Q92-1"/>
</dbReference>
<dbReference type="ProteomicsDB" id="285653">
    <molecule id="Q32Q92-2"/>
</dbReference>
<dbReference type="Antibodypedia" id="63322">
    <property type="antibodies" value="45 antibodies from 17 providers"/>
</dbReference>
<dbReference type="Ensembl" id="ENSMUST00000056822.4">
    <molecule id="Q32Q92-1"/>
    <property type="protein sequence ID" value="ENSMUSP00000056131.4"/>
    <property type="gene ID" value="ENSMUSG00000043487.5"/>
</dbReference>
<dbReference type="Ensembl" id="ENSMUST00000222921.2">
    <molecule id="Q32Q92-2"/>
    <property type="protein sequence ID" value="ENSMUSP00000152129.2"/>
    <property type="gene ID" value="ENSMUSG00000043487.5"/>
</dbReference>
<dbReference type="GeneID" id="217700"/>
<dbReference type="KEGG" id="mmu:217700"/>
<dbReference type="UCSC" id="uc007oei.1">
    <molecule id="Q32Q92-1"/>
    <property type="organism name" value="mouse"/>
</dbReference>
<dbReference type="UCSC" id="uc007oej.2">
    <molecule id="Q32Q92-2"/>
    <property type="organism name" value="mouse"/>
</dbReference>
<dbReference type="AGR" id="MGI:1921287"/>
<dbReference type="CTD" id="641372"/>
<dbReference type="MGI" id="MGI:1921287">
    <property type="gene designation" value="Acot6"/>
</dbReference>
<dbReference type="VEuPathDB" id="HostDB:ENSMUSG00000043487"/>
<dbReference type="eggNOG" id="ENOG502QQ8Z">
    <property type="taxonomic scope" value="Eukaryota"/>
</dbReference>
<dbReference type="GeneTree" id="ENSGT01010000222336"/>
<dbReference type="HOGENOM" id="CLU_029849_4_0_1"/>
<dbReference type="InParanoid" id="Q32Q92"/>
<dbReference type="OMA" id="GICEIPL"/>
<dbReference type="OrthoDB" id="6347013at2759"/>
<dbReference type="PhylomeDB" id="Q32Q92"/>
<dbReference type="TreeFam" id="TF314911"/>
<dbReference type="SABIO-RK" id="Q32Q92"/>
<dbReference type="UniPathway" id="UPA00199"/>
<dbReference type="BioGRID-ORCS" id="217700">
    <property type="hits" value="3 hits in 78 CRISPR screens"/>
</dbReference>
<dbReference type="PRO" id="PR:Q32Q92"/>
<dbReference type="Proteomes" id="UP000000589">
    <property type="component" value="Chromosome 12"/>
</dbReference>
<dbReference type="RNAct" id="Q32Q92">
    <property type="molecule type" value="protein"/>
</dbReference>
<dbReference type="Bgee" id="ENSMUSG00000043487">
    <property type="expression patterns" value="Expressed in cranial cartilage and 209 other cell types or tissues"/>
</dbReference>
<dbReference type="ExpressionAtlas" id="Q32Q92">
    <property type="expression patterns" value="baseline and differential"/>
</dbReference>
<dbReference type="GO" id="GO:0005829">
    <property type="term" value="C:cytosol"/>
    <property type="evidence" value="ECO:0007669"/>
    <property type="project" value="Ensembl"/>
</dbReference>
<dbReference type="GO" id="GO:0005777">
    <property type="term" value="C:peroxisome"/>
    <property type="evidence" value="ECO:0000304"/>
    <property type="project" value="HGNC-UCL"/>
</dbReference>
<dbReference type="GO" id="GO:0052689">
    <property type="term" value="F:carboxylic ester hydrolase activity"/>
    <property type="evidence" value="ECO:0007669"/>
    <property type="project" value="UniProtKB-KW"/>
</dbReference>
<dbReference type="GO" id="GO:0016790">
    <property type="term" value="F:thiolester hydrolase activity"/>
    <property type="evidence" value="ECO:0007669"/>
    <property type="project" value="InterPro"/>
</dbReference>
<dbReference type="GO" id="GO:0006637">
    <property type="term" value="P:acyl-CoA metabolic process"/>
    <property type="evidence" value="ECO:0007669"/>
    <property type="project" value="InterPro"/>
</dbReference>
<dbReference type="GO" id="GO:0006631">
    <property type="term" value="P:fatty acid metabolic process"/>
    <property type="evidence" value="ECO:0007669"/>
    <property type="project" value="UniProtKB-UniPathway"/>
</dbReference>
<dbReference type="FunFam" id="2.60.40.2240:FF:000001">
    <property type="entry name" value="acyl-coenzyme A thioesterase 4"/>
    <property type="match status" value="1"/>
</dbReference>
<dbReference type="FunFam" id="3.40.50.1820:FF:000024">
    <property type="entry name" value="acyl-coenzyme A thioesterase 4"/>
    <property type="match status" value="1"/>
</dbReference>
<dbReference type="Gene3D" id="2.60.40.2240">
    <property type="entry name" value="Acyl-CoA thioester hydrolase/BAAT N-terminal domain"/>
    <property type="match status" value="1"/>
</dbReference>
<dbReference type="Gene3D" id="3.40.50.1820">
    <property type="entry name" value="alpha/beta hydrolase"/>
    <property type="match status" value="1"/>
</dbReference>
<dbReference type="InterPro" id="IPR029058">
    <property type="entry name" value="AB_hydrolase_fold"/>
</dbReference>
<dbReference type="InterPro" id="IPR016662">
    <property type="entry name" value="Acyl-CoA_thioEstase_long-chain"/>
</dbReference>
<dbReference type="InterPro" id="IPR014940">
    <property type="entry name" value="BAAT_C"/>
</dbReference>
<dbReference type="InterPro" id="IPR006862">
    <property type="entry name" value="Thio_Ohase/aa_AcTrfase"/>
</dbReference>
<dbReference type="InterPro" id="IPR042490">
    <property type="entry name" value="Thio_Ohase/BAAT_N"/>
</dbReference>
<dbReference type="PANTHER" id="PTHR10824:SF17">
    <property type="entry name" value="ACYL-COENZYME A THIOESTERASE 6"/>
    <property type="match status" value="1"/>
</dbReference>
<dbReference type="PANTHER" id="PTHR10824">
    <property type="entry name" value="ACYL-COENZYME A THIOESTERASE-RELATED"/>
    <property type="match status" value="1"/>
</dbReference>
<dbReference type="Pfam" id="PF08840">
    <property type="entry name" value="BAAT_C"/>
    <property type="match status" value="1"/>
</dbReference>
<dbReference type="Pfam" id="PF04775">
    <property type="entry name" value="Bile_Hydr_Trans"/>
    <property type="match status" value="1"/>
</dbReference>
<dbReference type="PIRSF" id="PIRSF016521">
    <property type="entry name" value="Acyl-CoA_hydro"/>
    <property type="match status" value="1"/>
</dbReference>
<dbReference type="SUPFAM" id="SSF53474">
    <property type="entry name" value="alpha/beta-Hydrolases"/>
    <property type="match status" value="1"/>
</dbReference>
<comment type="function">
    <text evidence="2">Catalyzes the hydrolysis of acyl-CoAs into free fatty acids and coenzyme A (CoASH), regulating their respective intracellular levels. Catalyzes the hydrolysis of phytanoyl-CoA and pristanoyl-CoA, two methyl-branched fatty acids derived from phytol, that enter the body via the diet.</text>
</comment>
<comment type="catalytic activity">
    <reaction evidence="2">
        <text>pristanoyl-CoA + H2O = 2,6,10,14-tetramethylpentadecanoate + CoA + H(+)</text>
        <dbReference type="Rhea" id="RHEA:40415"/>
        <dbReference type="ChEBI" id="CHEBI:15377"/>
        <dbReference type="ChEBI" id="CHEBI:15378"/>
        <dbReference type="ChEBI" id="CHEBI:57287"/>
        <dbReference type="ChEBI" id="CHEBI:77250"/>
        <dbReference type="ChEBI" id="CHEBI:77268"/>
    </reaction>
    <physiologicalReaction direction="left-to-right" evidence="6">
        <dbReference type="Rhea" id="RHEA:40416"/>
    </physiologicalReaction>
</comment>
<comment type="catalytic activity">
    <reaction evidence="2">
        <text>phytanoyl-CoA + H2O = 3,7,11,15-tetramethylhexadecanoate + CoA + H(+)</text>
        <dbReference type="Rhea" id="RHEA:40419"/>
        <dbReference type="ChEBI" id="CHEBI:15377"/>
        <dbReference type="ChEBI" id="CHEBI:15378"/>
        <dbReference type="ChEBI" id="CHEBI:37257"/>
        <dbReference type="ChEBI" id="CHEBI:57287"/>
        <dbReference type="ChEBI" id="CHEBI:57391"/>
    </reaction>
    <physiologicalReaction direction="left-to-right" evidence="6">
        <dbReference type="Rhea" id="RHEA:40420"/>
    </physiologicalReaction>
</comment>
<comment type="biophysicochemical properties">
    <kinetics>
        <KM evidence="2">24 uM for pristanoyl-CoA</KM>
        <Vmax evidence="2">3.2 umol/min/mg enzyme with pristanoyl-CoA as substrate</Vmax>
    </kinetics>
</comment>
<comment type="pathway">
    <text evidence="6">Lipid metabolism; fatty acid metabolism.</text>
</comment>
<comment type="subcellular location">
    <subcellularLocation>
        <location evidence="2">Peroxisome</location>
    </subcellularLocation>
</comment>
<comment type="alternative products">
    <event type="alternative splicing"/>
    <isoform>
        <id>Q32Q92-1</id>
        <name>1</name>
        <sequence type="displayed"/>
    </isoform>
    <isoform>
        <id>Q32Q92-2</id>
        <name>2</name>
        <sequence type="described" ref="VSP_028234 VSP_028235"/>
    </isoform>
</comment>
<comment type="tissue specificity">
    <text evidence="2">Highly expressed in white adipose tissue. Detected at lower levels in kidney, liver, brown adipose tissue and brain.</text>
</comment>
<comment type="induction">
    <text evidence="2">Up-regulated in liver upon treatment with peroxisome proliferator.</text>
</comment>
<comment type="similarity">
    <text evidence="5">Belongs to the C/M/P thioester hydrolase family.</text>
</comment>
<comment type="sequence caution" evidence="5">
    <conflict type="erroneous initiation">
        <sequence resource="EMBL-CDS" id="BAC30372"/>
    </conflict>
    <text>Truncated N-terminus.</text>
</comment>
<comment type="sequence caution" evidence="5">
    <conflict type="frameshift">
        <sequence resource="EMBL-CDS" id="BAC33071"/>
    </conflict>
</comment>
<comment type="sequence caution" evidence="5">
    <conflict type="miscellaneous discrepancy">
        <sequence resource="EMBL-CDS" id="BAE37416"/>
    </conflict>
    <text>Contaminating sequence. Small insertion of unknown origin.</text>
</comment>
<organism>
    <name type="scientific">Mus musculus</name>
    <name type="common">Mouse</name>
    <dbReference type="NCBI Taxonomy" id="10090"/>
    <lineage>
        <taxon>Eukaryota</taxon>
        <taxon>Metazoa</taxon>
        <taxon>Chordata</taxon>
        <taxon>Craniata</taxon>
        <taxon>Vertebrata</taxon>
        <taxon>Euteleostomi</taxon>
        <taxon>Mammalia</taxon>
        <taxon>Eutheria</taxon>
        <taxon>Euarchontoglires</taxon>
        <taxon>Glires</taxon>
        <taxon>Rodentia</taxon>
        <taxon>Myomorpha</taxon>
        <taxon>Muroidea</taxon>
        <taxon>Muridae</taxon>
        <taxon>Murinae</taxon>
        <taxon>Mus</taxon>
        <taxon>Mus</taxon>
    </lineage>
</organism>
<reference key="1">
    <citation type="journal article" date="2007" name="J. Biol. Chem.">
        <title>Peroxisomes contain a specific phytanoyl-CoA/pristanoyl-CoA thioesterase acting as a novel auxiliary enzyme in alpha- and beta-oxidation of methyl-branched fatty acids in mouse.</title>
        <authorList>
            <person name="Westin M.A.K."/>
            <person name="Hunt M.C."/>
            <person name="Alexson S.E.H."/>
        </authorList>
    </citation>
    <scope>NUCLEOTIDE SEQUENCE [MRNA] (ISOFORM 1)</scope>
    <scope>FUNCTION</scope>
    <scope>CATALYTIC ACTIVITY</scope>
    <scope>BIOPHYSICOCHEMICAL PROPERTIES</scope>
    <scope>SUBCELLULAR LOCATION</scope>
    <scope>INDUCTION</scope>
    <scope>TISSUE SPECIFICITY</scope>
    <source>
        <strain>129/Sv</strain>
    </source>
</reference>
<reference key="2">
    <citation type="journal article" date="2005" name="Science">
        <title>The transcriptional landscape of the mammalian genome.</title>
        <authorList>
            <person name="Carninci P."/>
            <person name="Kasukawa T."/>
            <person name="Katayama S."/>
            <person name="Gough J."/>
            <person name="Frith M.C."/>
            <person name="Maeda N."/>
            <person name="Oyama R."/>
            <person name="Ravasi T."/>
            <person name="Lenhard B."/>
            <person name="Wells C."/>
            <person name="Kodzius R."/>
            <person name="Shimokawa K."/>
            <person name="Bajic V.B."/>
            <person name="Brenner S.E."/>
            <person name="Batalov S."/>
            <person name="Forrest A.R."/>
            <person name="Zavolan M."/>
            <person name="Davis M.J."/>
            <person name="Wilming L.G."/>
            <person name="Aidinis V."/>
            <person name="Allen J.E."/>
            <person name="Ambesi-Impiombato A."/>
            <person name="Apweiler R."/>
            <person name="Aturaliya R.N."/>
            <person name="Bailey T.L."/>
            <person name="Bansal M."/>
            <person name="Baxter L."/>
            <person name="Beisel K.W."/>
            <person name="Bersano T."/>
            <person name="Bono H."/>
            <person name="Chalk A.M."/>
            <person name="Chiu K.P."/>
            <person name="Choudhary V."/>
            <person name="Christoffels A."/>
            <person name="Clutterbuck D.R."/>
            <person name="Crowe M.L."/>
            <person name="Dalla E."/>
            <person name="Dalrymple B.P."/>
            <person name="de Bono B."/>
            <person name="Della Gatta G."/>
            <person name="di Bernardo D."/>
            <person name="Down T."/>
            <person name="Engstrom P."/>
            <person name="Fagiolini M."/>
            <person name="Faulkner G."/>
            <person name="Fletcher C.F."/>
            <person name="Fukushima T."/>
            <person name="Furuno M."/>
            <person name="Futaki S."/>
            <person name="Gariboldi M."/>
            <person name="Georgii-Hemming P."/>
            <person name="Gingeras T.R."/>
            <person name="Gojobori T."/>
            <person name="Green R.E."/>
            <person name="Gustincich S."/>
            <person name="Harbers M."/>
            <person name="Hayashi Y."/>
            <person name="Hensch T.K."/>
            <person name="Hirokawa N."/>
            <person name="Hill D."/>
            <person name="Huminiecki L."/>
            <person name="Iacono M."/>
            <person name="Ikeo K."/>
            <person name="Iwama A."/>
            <person name="Ishikawa T."/>
            <person name="Jakt M."/>
            <person name="Kanapin A."/>
            <person name="Katoh M."/>
            <person name="Kawasawa Y."/>
            <person name="Kelso J."/>
            <person name="Kitamura H."/>
            <person name="Kitano H."/>
            <person name="Kollias G."/>
            <person name="Krishnan S.P."/>
            <person name="Kruger A."/>
            <person name="Kummerfeld S.K."/>
            <person name="Kurochkin I.V."/>
            <person name="Lareau L.F."/>
            <person name="Lazarevic D."/>
            <person name="Lipovich L."/>
            <person name="Liu J."/>
            <person name="Liuni S."/>
            <person name="McWilliam S."/>
            <person name="Madan Babu M."/>
            <person name="Madera M."/>
            <person name="Marchionni L."/>
            <person name="Matsuda H."/>
            <person name="Matsuzawa S."/>
            <person name="Miki H."/>
            <person name="Mignone F."/>
            <person name="Miyake S."/>
            <person name="Morris K."/>
            <person name="Mottagui-Tabar S."/>
            <person name="Mulder N."/>
            <person name="Nakano N."/>
            <person name="Nakauchi H."/>
            <person name="Ng P."/>
            <person name="Nilsson R."/>
            <person name="Nishiguchi S."/>
            <person name="Nishikawa S."/>
            <person name="Nori F."/>
            <person name="Ohara O."/>
            <person name="Okazaki Y."/>
            <person name="Orlando V."/>
            <person name="Pang K.C."/>
            <person name="Pavan W.J."/>
            <person name="Pavesi G."/>
            <person name="Pesole G."/>
            <person name="Petrovsky N."/>
            <person name="Piazza S."/>
            <person name="Reed J."/>
            <person name="Reid J.F."/>
            <person name="Ring B.Z."/>
            <person name="Ringwald M."/>
            <person name="Rost B."/>
            <person name="Ruan Y."/>
            <person name="Salzberg S.L."/>
            <person name="Sandelin A."/>
            <person name="Schneider C."/>
            <person name="Schoenbach C."/>
            <person name="Sekiguchi K."/>
            <person name="Semple C.A."/>
            <person name="Seno S."/>
            <person name="Sessa L."/>
            <person name="Sheng Y."/>
            <person name="Shibata Y."/>
            <person name="Shimada H."/>
            <person name="Shimada K."/>
            <person name="Silva D."/>
            <person name="Sinclair B."/>
            <person name="Sperling S."/>
            <person name="Stupka E."/>
            <person name="Sugiura K."/>
            <person name="Sultana R."/>
            <person name="Takenaka Y."/>
            <person name="Taki K."/>
            <person name="Tammoja K."/>
            <person name="Tan S.L."/>
            <person name="Tang S."/>
            <person name="Taylor M.S."/>
            <person name="Tegner J."/>
            <person name="Teichmann S.A."/>
            <person name="Ueda H.R."/>
            <person name="van Nimwegen E."/>
            <person name="Verardo R."/>
            <person name="Wei C.L."/>
            <person name="Yagi K."/>
            <person name="Yamanishi H."/>
            <person name="Zabarovsky E."/>
            <person name="Zhu S."/>
            <person name="Zimmer A."/>
            <person name="Hide W."/>
            <person name="Bult C."/>
            <person name="Grimmond S.M."/>
            <person name="Teasdale R.D."/>
            <person name="Liu E.T."/>
            <person name="Brusic V."/>
            <person name="Quackenbush J."/>
            <person name="Wahlestedt C."/>
            <person name="Mattick J.S."/>
            <person name="Hume D.A."/>
            <person name="Kai C."/>
            <person name="Sasaki D."/>
            <person name="Tomaru Y."/>
            <person name="Fukuda S."/>
            <person name="Kanamori-Katayama M."/>
            <person name="Suzuki M."/>
            <person name="Aoki J."/>
            <person name="Arakawa T."/>
            <person name="Iida J."/>
            <person name="Imamura K."/>
            <person name="Itoh M."/>
            <person name="Kato T."/>
            <person name="Kawaji H."/>
            <person name="Kawagashira N."/>
            <person name="Kawashima T."/>
            <person name="Kojima M."/>
            <person name="Kondo S."/>
            <person name="Konno H."/>
            <person name="Nakano K."/>
            <person name="Ninomiya N."/>
            <person name="Nishio T."/>
            <person name="Okada M."/>
            <person name="Plessy C."/>
            <person name="Shibata K."/>
            <person name="Shiraki T."/>
            <person name="Suzuki S."/>
            <person name="Tagami M."/>
            <person name="Waki K."/>
            <person name="Watahiki A."/>
            <person name="Okamura-Oho Y."/>
            <person name="Suzuki H."/>
            <person name="Kawai J."/>
            <person name="Hayashizaki Y."/>
        </authorList>
    </citation>
    <scope>NUCLEOTIDE SEQUENCE [LARGE SCALE MRNA] (ISOFORM 2)</scope>
    <scope>NUCLEOTIDE SEQUENCE [LARGE SCALE MRNA] OF 63-419 (ISOFORM 1)</scope>
    <source>
        <strain>C57BL/6J</strain>
        <tissue>Adipose tissue</tissue>
        <tissue>Cerebellum</tissue>
        <tissue>Spinal cord</tissue>
    </source>
</reference>
<reference key="3">
    <citation type="journal article" date="2004" name="Genome Res.">
        <title>The status, quality, and expansion of the NIH full-length cDNA project: the Mammalian Gene Collection (MGC).</title>
        <authorList>
            <consortium name="The MGC Project Team"/>
        </authorList>
    </citation>
    <scope>NUCLEOTIDE SEQUENCE [LARGE SCALE MRNA] (ISOFORM 2)</scope>
    <source>
        <strain>C57BL/6J</strain>
        <strain>FVB/N</strain>
        <tissue>Mammary tumor</tissue>
    </source>
</reference>
<sequence length="419" mass="46769">MAATLSVEPAGRSCWDEPLSIAVRGLAPEQPVTLRSVLRDEKGMLFRAHARYRADSHGELDLARTPALGGSFSGLEPMGLLWAMEPDRPFWRLIKRDVQIPFVVELEVLDGHEPDGGQRLARAVHERHFMAPGVRRVPVREGRVRATLFLPPGKGQFPGIIDLYGSIGGLCEHRASLLAGHGFAVLALAYFQFEDLPENLSDVRLEYFEEALALMLRHPQVKGPNIGLIGVSKGADLCLSMAAFLKDNITATVLINACVANTLVPLYYKDLFVPELGCDQTKNKSGLMDLRDMWNNPLEEPNHQSLIPLEKAQGPFLFLVGMDDHNWKSDVYARIACERLQAHGKDRPQIIYYPETGHCIEPPYFPPPIATVHFVLGEAVFNGGKPRAQSRAQLDAWQRIQTFFQKYLNGEKPARHSKL</sequence>
<evidence type="ECO:0000250" key="1">
    <source>
        <dbReference type="UniProtKB" id="O55137"/>
    </source>
</evidence>
<evidence type="ECO:0000269" key="2">
    <source>
    </source>
</evidence>
<evidence type="ECO:0000303" key="3">
    <source>
    </source>
</evidence>
<evidence type="ECO:0000303" key="4">
    <source>
    </source>
</evidence>
<evidence type="ECO:0000305" key="5"/>
<evidence type="ECO:0000305" key="6">
    <source>
    </source>
</evidence>
<evidence type="ECO:0000312" key="7">
    <source>
        <dbReference type="MGI" id="MGI:1921287"/>
    </source>
</evidence>
<gene>
    <name evidence="7" type="primary">Acot6</name>
</gene>
<protein>
    <recommendedName>
        <fullName evidence="6">Acyl-coenzyme A thioesterase 6</fullName>
        <shortName evidence="6">Acyl-CoA thioesterase 6</shortName>
        <ecNumber evidence="2">3.1.2.-</ecNumber>
    </recommendedName>
</protein>
<feature type="chain" id="PRO_0000305099" description="Acyl-coenzyme A thioesterase 6">
    <location>
        <begin position="1"/>
        <end position="419"/>
    </location>
</feature>
<feature type="short sequence motif" description="Peroxisome targeting signal" evidence="6">
    <location>
        <begin position="417"/>
        <end position="419"/>
    </location>
</feature>
<feature type="active site" description="Charge relay system" evidence="1">
    <location>
        <position position="232"/>
    </location>
</feature>
<feature type="active site" description="Charge relay system" evidence="1">
    <location>
        <position position="324"/>
    </location>
</feature>
<feature type="active site" description="Charge relay system" evidence="1">
    <location>
        <position position="358"/>
    </location>
</feature>
<feature type="splice variant" id="VSP_028234" description="In isoform 2." evidence="3 4">
    <original>KGQFPGIIDLYGSIGGLCEHRAS</original>
    <variation>EQLSTHLPTRFLSSQPSLFFGPE</variation>
    <location>
        <begin position="154"/>
        <end position="176"/>
    </location>
</feature>
<feature type="splice variant" id="VSP_028235" description="In isoform 2." evidence="3 4">
    <location>
        <begin position="177"/>
        <end position="419"/>
    </location>
</feature>